<proteinExistence type="inferred from homology"/>
<evidence type="ECO:0000255" key="1">
    <source>
        <dbReference type="HAMAP-Rule" id="MF_00491"/>
    </source>
</evidence>
<geneLocation type="chloroplast"/>
<dbReference type="EC" id="7.1.1.-" evidence="1"/>
<dbReference type="EMBL" id="DQ887676">
    <property type="protein sequence ID" value="ABH88348.1"/>
    <property type="molecule type" value="Genomic_DNA"/>
</dbReference>
<dbReference type="RefSeq" id="YP_784437.1">
    <property type="nucleotide sequence ID" value="NC_008456.1"/>
</dbReference>
<dbReference type="SMR" id="Q06GU6"/>
<dbReference type="GeneID" id="4363558"/>
<dbReference type="GO" id="GO:0009535">
    <property type="term" value="C:chloroplast thylakoid membrane"/>
    <property type="evidence" value="ECO:0007669"/>
    <property type="project" value="UniProtKB-SubCell"/>
</dbReference>
<dbReference type="GO" id="GO:0008137">
    <property type="term" value="F:NADH dehydrogenase (ubiquinone) activity"/>
    <property type="evidence" value="ECO:0007669"/>
    <property type="project" value="InterPro"/>
</dbReference>
<dbReference type="GO" id="GO:0048039">
    <property type="term" value="F:ubiquinone binding"/>
    <property type="evidence" value="ECO:0007669"/>
    <property type="project" value="TreeGrafter"/>
</dbReference>
<dbReference type="GO" id="GO:0042773">
    <property type="term" value="P:ATP synthesis coupled electron transport"/>
    <property type="evidence" value="ECO:0007669"/>
    <property type="project" value="InterPro"/>
</dbReference>
<dbReference type="GO" id="GO:0015990">
    <property type="term" value="P:electron transport coupled proton transport"/>
    <property type="evidence" value="ECO:0007669"/>
    <property type="project" value="TreeGrafter"/>
</dbReference>
<dbReference type="HAMAP" id="MF_00491">
    <property type="entry name" value="NDH1_NuoM"/>
    <property type="match status" value="1"/>
</dbReference>
<dbReference type="InterPro" id="IPR022997">
    <property type="entry name" value="NADH_Q_OxRdtase_chain4"/>
</dbReference>
<dbReference type="InterPro" id="IPR010227">
    <property type="entry name" value="NADH_Q_OxRdtase_chainM/4"/>
</dbReference>
<dbReference type="InterPro" id="IPR003918">
    <property type="entry name" value="NADH_UbQ_OxRdtase"/>
</dbReference>
<dbReference type="InterPro" id="IPR001750">
    <property type="entry name" value="ND/Mrp_TM"/>
</dbReference>
<dbReference type="NCBIfam" id="TIGR01972">
    <property type="entry name" value="NDH_I_M"/>
    <property type="match status" value="1"/>
</dbReference>
<dbReference type="PANTHER" id="PTHR43507:SF21">
    <property type="entry name" value="NAD(P)H-QUINONE OXIDOREDUCTASE CHAIN 4, CHLOROPLASTIC"/>
    <property type="match status" value="1"/>
</dbReference>
<dbReference type="PANTHER" id="PTHR43507">
    <property type="entry name" value="NADH-UBIQUINONE OXIDOREDUCTASE CHAIN 4"/>
    <property type="match status" value="1"/>
</dbReference>
<dbReference type="Pfam" id="PF00361">
    <property type="entry name" value="Proton_antipo_M"/>
    <property type="match status" value="1"/>
</dbReference>
<dbReference type="PRINTS" id="PR01437">
    <property type="entry name" value="NUOXDRDTASE4"/>
</dbReference>
<organism>
    <name type="scientific">Drimys granadensis</name>
    <dbReference type="NCBI Taxonomy" id="224735"/>
    <lineage>
        <taxon>Eukaryota</taxon>
        <taxon>Viridiplantae</taxon>
        <taxon>Streptophyta</taxon>
        <taxon>Embryophyta</taxon>
        <taxon>Tracheophyta</taxon>
        <taxon>Spermatophyta</taxon>
        <taxon>Magnoliopsida</taxon>
        <taxon>Magnoliidae</taxon>
        <taxon>Canellales</taxon>
        <taxon>Winteraceae</taxon>
        <taxon>Drimys</taxon>
    </lineage>
</organism>
<accession>Q06GU6</accession>
<name>NU4C_DRIGR</name>
<comment type="catalytic activity">
    <reaction evidence="1">
        <text>a plastoquinone + NADH + (n+1) H(+)(in) = a plastoquinol + NAD(+) + n H(+)(out)</text>
        <dbReference type="Rhea" id="RHEA:42608"/>
        <dbReference type="Rhea" id="RHEA-COMP:9561"/>
        <dbReference type="Rhea" id="RHEA-COMP:9562"/>
        <dbReference type="ChEBI" id="CHEBI:15378"/>
        <dbReference type="ChEBI" id="CHEBI:17757"/>
        <dbReference type="ChEBI" id="CHEBI:57540"/>
        <dbReference type="ChEBI" id="CHEBI:57945"/>
        <dbReference type="ChEBI" id="CHEBI:62192"/>
    </reaction>
</comment>
<comment type="catalytic activity">
    <reaction evidence="1">
        <text>a plastoquinone + NADPH + (n+1) H(+)(in) = a plastoquinol + NADP(+) + n H(+)(out)</text>
        <dbReference type="Rhea" id="RHEA:42612"/>
        <dbReference type="Rhea" id="RHEA-COMP:9561"/>
        <dbReference type="Rhea" id="RHEA-COMP:9562"/>
        <dbReference type="ChEBI" id="CHEBI:15378"/>
        <dbReference type="ChEBI" id="CHEBI:17757"/>
        <dbReference type="ChEBI" id="CHEBI:57783"/>
        <dbReference type="ChEBI" id="CHEBI:58349"/>
        <dbReference type="ChEBI" id="CHEBI:62192"/>
    </reaction>
</comment>
<comment type="subcellular location">
    <subcellularLocation>
        <location evidence="1">Plastid</location>
        <location evidence="1">Chloroplast thylakoid membrane</location>
        <topology evidence="1">Multi-pass membrane protein</topology>
    </subcellularLocation>
</comment>
<comment type="similarity">
    <text evidence="1">Belongs to the complex I subunit 4 family.</text>
</comment>
<protein>
    <recommendedName>
        <fullName evidence="1">NAD(P)H-quinone oxidoreductase chain 4, chloroplastic</fullName>
        <ecNumber evidence="1">7.1.1.-</ecNumber>
    </recommendedName>
    <alternativeName>
        <fullName evidence="1">NAD(P)H dehydrogenase, chain 4</fullName>
    </alternativeName>
    <alternativeName>
        <fullName evidence="1">NADH-plastoquinone oxidoreductase chain 4</fullName>
    </alternativeName>
</protein>
<feature type="chain" id="PRO_0000275906" description="NAD(P)H-quinone oxidoreductase chain 4, chloroplastic">
    <location>
        <begin position="1"/>
        <end position="503"/>
    </location>
</feature>
<feature type="transmembrane region" description="Helical" evidence="1">
    <location>
        <begin position="4"/>
        <end position="24"/>
    </location>
</feature>
<feature type="transmembrane region" description="Helical" evidence="1">
    <location>
        <begin position="37"/>
        <end position="57"/>
    </location>
</feature>
<feature type="transmembrane region" description="Helical" evidence="1">
    <location>
        <begin position="87"/>
        <end position="107"/>
    </location>
</feature>
<feature type="transmembrane region" description="Helical" evidence="1">
    <location>
        <begin position="134"/>
        <end position="154"/>
    </location>
</feature>
<feature type="transmembrane region" description="Helical" evidence="1">
    <location>
        <begin position="167"/>
        <end position="187"/>
    </location>
</feature>
<feature type="transmembrane region" description="Helical" evidence="1">
    <location>
        <begin position="208"/>
        <end position="228"/>
    </location>
</feature>
<feature type="transmembrane region" description="Helical" evidence="1">
    <location>
        <begin position="242"/>
        <end position="262"/>
    </location>
</feature>
<feature type="transmembrane region" description="Helical" evidence="1">
    <location>
        <begin position="272"/>
        <end position="292"/>
    </location>
</feature>
<feature type="transmembrane region" description="Helical" evidence="1">
    <location>
        <begin position="305"/>
        <end position="325"/>
    </location>
</feature>
<feature type="transmembrane region" description="Helical" evidence="1">
    <location>
        <begin position="330"/>
        <end position="350"/>
    </location>
</feature>
<feature type="transmembrane region" description="Helical" evidence="1">
    <location>
        <begin position="386"/>
        <end position="406"/>
    </location>
</feature>
<feature type="transmembrane region" description="Helical" evidence="1">
    <location>
        <begin position="416"/>
        <end position="436"/>
    </location>
</feature>
<feature type="transmembrane region" description="Helical" evidence="1">
    <location>
        <begin position="462"/>
        <end position="482"/>
    </location>
</feature>
<gene>
    <name evidence="1" type="primary">ndhD</name>
</gene>
<sequence>MSYFPWLTIIVVFPISAGSSIFFLPHRGNKVVRWYTICICLLELLLTTYAFCYHFQLDDPLIQLEEDYKWINILDFHWRLGIDGLSIGPTLLTGFITTLATLAAWPVTRDSQLFHFLMLAMYSGQIGSFSSRDLLLFFIMWELELIPVYLLLSMWGGKKRLYSATKFILYTAGGSIFLLMGVPGMGLYGSNEPTLNLETSANRSYPAALEIIFYFGFFIAYAVKSPIIPLHTWLPDTHGEAHYSTCMLLAGILLKMGAYGLVRINMELLPHAHSIFSPWLMIVGTIQIIYAASTSPGQPNFKKRIAYSSVSHMGFTIIGIASITDMGLNGAILQIISHGFIGAALFFLAGTSYDRIGLVYLDEMGGIAIPMPKIFTMFSSFSMASLALPGMSGFFAELVVFFGIITSTKYLLMPKILITFVMAIGMILTPIYSLSMLRQMFYGYKLFNVTNSYFVDSGPRELFVSICIFLPVIGIGIYPDFVLSLSVEKIEAILSNYLHKSFS</sequence>
<keyword id="KW-0150">Chloroplast</keyword>
<keyword id="KW-0472">Membrane</keyword>
<keyword id="KW-0520">NAD</keyword>
<keyword id="KW-0521">NADP</keyword>
<keyword id="KW-0934">Plastid</keyword>
<keyword id="KW-0618">Plastoquinone</keyword>
<keyword id="KW-0874">Quinone</keyword>
<keyword id="KW-0793">Thylakoid</keyword>
<keyword id="KW-1278">Translocase</keyword>
<keyword id="KW-0812">Transmembrane</keyword>
<keyword id="KW-1133">Transmembrane helix</keyword>
<reference key="1">
    <citation type="journal article" date="2006" name="BMC Evol. Biol.">
        <title>Complete plastid genome sequences of Drimys, Liriodendron, and Piper: implications for the phylogenetic relationships of magnoliids.</title>
        <authorList>
            <person name="Cai Z."/>
            <person name="Penaflor C."/>
            <person name="Kuehl J.V."/>
            <person name="Leebens-Mack J."/>
            <person name="Carlson J.E."/>
            <person name="dePamphilis C.W."/>
            <person name="Boore J.L."/>
            <person name="Jansen R.K."/>
        </authorList>
    </citation>
    <scope>NUCLEOTIDE SEQUENCE [LARGE SCALE GENOMIC DNA]</scope>
</reference>